<organism>
    <name type="scientific">Chlorobium luteolum (strain DSM 273 / BCRC 81028 / 2530)</name>
    <name type="common">Pelodictyon luteolum</name>
    <dbReference type="NCBI Taxonomy" id="319225"/>
    <lineage>
        <taxon>Bacteria</taxon>
        <taxon>Pseudomonadati</taxon>
        <taxon>Chlorobiota</taxon>
        <taxon>Chlorobiia</taxon>
        <taxon>Chlorobiales</taxon>
        <taxon>Chlorobiaceae</taxon>
        <taxon>Chlorobium/Pelodictyon group</taxon>
        <taxon>Pelodictyon</taxon>
    </lineage>
</organism>
<protein>
    <recommendedName>
        <fullName evidence="1">Pyridoxine 5'-phosphate synthase</fullName>
        <shortName evidence="1">PNP synthase</shortName>
        <ecNumber evidence="1">2.6.99.2</ecNumber>
    </recommendedName>
</protein>
<evidence type="ECO:0000255" key="1">
    <source>
        <dbReference type="HAMAP-Rule" id="MF_00279"/>
    </source>
</evidence>
<keyword id="KW-0963">Cytoplasm</keyword>
<keyword id="KW-0664">Pyridoxine biosynthesis</keyword>
<keyword id="KW-1185">Reference proteome</keyword>
<keyword id="KW-0808">Transferase</keyword>
<sequence>MRLAVNIDHIATLRNARNEGEPDPVAAALLAEESGAAGIVCHLREDRRHIRDNDLKGLRRSVKTKLDLEMAMTEEMQRIAIETVPELITLVPEKREELTTEGGFDIERHFKRLALFIEPIRAAGIEVSLFIEPDSRSIDLAAEAGSDLVELHTGSYALKSGEEQTAEFERIRHAAKYAVDRGLKVVAGHGLNYRNIQPFRQIPEIEEVSIGHALIARAAFVGIPEAVREMLDLIG</sequence>
<feature type="chain" id="PRO_0000231825" description="Pyridoxine 5'-phosphate synthase">
    <location>
        <begin position="1"/>
        <end position="235"/>
    </location>
</feature>
<feature type="active site" description="Proton acceptor" evidence="1">
    <location>
        <position position="42"/>
    </location>
</feature>
<feature type="active site" description="Proton acceptor" evidence="1">
    <location>
        <position position="69"/>
    </location>
</feature>
<feature type="active site" description="Proton donor" evidence="1">
    <location>
        <position position="189"/>
    </location>
</feature>
<feature type="binding site" evidence="1">
    <location>
        <position position="6"/>
    </location>
    <ligand>
        <name>3-amino-2-oxopropyl phosphate</name>
        <dbReference type="ChEBI" id="CHEBI:57279"/>
    </ligand>
</feature>
<feature type="binding site" evidence="1">
    <location>
        <begin position="8"/>
        <end position="9"/>
    </location>
    <ligand>
        <name>1-deoxy-D-xylulose 5-phosphate</name>
        <dbReference type="ChEBI" id="CHEBI:57792"/>
    </ligand>
</feature>
<feature type="binding site" evidence="1">
    <location>
        <position position="17"/>
    </location>
    <ligand>
        <name>3-amino-2-oxopropyl phosphate</name>
        <dbReference type="ChEBI" id="CHEBI:57279"/>
    </ligand>
</feature>
<feature type="binding site" evidence="1">
    <location>
        <position position="44"/>
    </location>
    <ligand>
        <name>1-deoxy-D-xylulose 5-phosphate</name>
        <dbReference type="ChEBI" id="CHEBI:57792"/>
    </ligand>
</feature>
<feature type="binding site" evidence="1">
    <location>
        <position position="49"/>
    </location>
    <ligand>
        <name>1-deoxy-D-xylulose 5-phosphate</name>
        <dbReference type="ChEBI" id="CHEBI:57792"/>
    </ligand>
</feature>
<feature type="binding site" evidence="1">
    <location>
        <position position="99"/>
    </location>
    <ligand>
        <name>1-deoxy-D-xylulose 5-phosphate</name>
        <dbReference type="ChEBI" id="CHEBI:57792"/>
    </ligand>
</feature>
<feature type="binding site" evidence="1">
    <location>
        <position position="190"/>
    </location>
    <ligand>
        <name>3-amino-2-oxopropyl phosphate</name>
        <dbReference type="ChEBI" id="CHEBI:57279"/>
    </ligand>
</feature>
<feature type="binding site" evidence="1">
    <location>
        <begin position="211"/>
        <end position="212"/>
    </location>
    <ligand>
        <name>3-amino-2-oxopropyl phosphate</name>
        <dbReference type="ChEBI" id="CHEBI:57279"/>
    </ligand>
</feature>
<feature type="site" description="Transition state stabilizer" evidence="1">
    <location>
        <position position="150"/>
    </location>
</feature>
<accession>Q3B5P7</accession>
<name>PDXJ_CHLL3</name>
<dbReference type="EC" id="2.6.99.2" evidence="1"/>
<dbReference type="EMBL" id="CP000096">
    <property type="protein sequence ID" value="ABB23334.1"/>
    <property type="molecule type" value="Genomic_DNA"/>
</dbReference>
<dbReference type="RefSeq" id="WP_011357209.1">
    <property type="nucleotide sequence ID" value="NC_007512.1"/>
</dbReference>
<dbReference type="SMR" id="Q3B5P7"/>
<dbReference type="STRING" id="319225.Plut_0446"/>
<dbReference type="KEGG" id="plt:Plut_0446"/>
<dbReference type="eggNOG" id="COG0854">
    <property type="taxonomic scope" value="Bacteria"/>
</dbReference>
<dbReference type="HOGENOM" id="CLU_074563_0_0_10"/>
<dbReference type="OrthoDB" id="9806590at2"/>
<dbReference type="UniPathway" id="UPA00244">
    <property type="reaction ID" value="UER00313"/>
</dbReference>
<dbReference type="Proteomes" id="UP000002709">
    <property type="component" value="Chromosome"/>
</dbReference>
<dbReference type="GO" id="GO:0005829">
    <property type="term" value="C:cytosol"/>
    <property type="evidence" value="ECO:0007669"/>
    <property type="project" value="TreeGrafter"/>
</dbReference>
<dbReference type="GO" id="GO:0033856">
    <property type="term" value="F:pyridoxine 5'-phosphate synthase activity"/>
    <property type="evidence" value="ECO:0007669"/>
    <property type="project" value="UniProtKB-EC"/>
</dbReference>
<dbReference type="GO" id="GO:0008615">
    <property type="term" value="P:pyridoxine biosynthetic process"/>
    <property type="evidence" value="ECO:0007669"/>
    <property type="project" value="UniProtKB-UniRule"/>
</dbReference>
<dbReference type="CDD" id="cd00003">
    <property type="entry name" value="PNPsynthase"/>
    <property type="match status" value="1"/>
</dbReference>
<dbReference type="Gene3D" id="3.20.20.70">
    <property type="entry name" value="Aldolase class I"/>
    <property type="match status" value="1"/>
</dbReference>
<dbReference type="HAMAP" id="MF_00279">
    <property type="entry name" value="PdxJ"/>
    <property type="match status" value="1"/>
</dbReference>
<dbReference type="InterPro" id="IPR013785">
    <property type="entry name" value="Aldolase_TIM"/>
</dbReference>
<dbReference type="InterPro" id="IPR004569">
    <property type="entry name" value="PyrdxlP_synth_PdxJ"/>
</dbReference>
<dbReference type="InterPro" id="IPR036130">
    <property type="entry name" value="Pyridoxine-5'_phos_synth"/>
</dbReference>
<dbReference type="NCBIfam" id="TIGR00559">
    <property type="entry name" value="pdxJ"/>
    <property type="match status" value="1"/>
</dbReference>
<dbReference type="NCBIfam" id="NF003625">
    <property type="entry name" value="PRK05265.1-3"/>
    <property type="match status" value="1"/>
</dbReference>
<dbReference type="NCBIfam" id="NF003627">
    <property type="entry name" value="PRK05265.1-5"/>
    <property type="match status" value="1"/>
</dbReference>
<dbReference type="PANTHER" id="PTHR30456">
    <property type="entry name" value="PYRIDOXINE 5'-PHOSPHATE SYNTHASE"/>
    <property type="match status" value="1"/>
</dbReference>
<dbReference type="PANTHER" id="PTHR30456:SF0">
    <property type="entry name" value="PYRIDOXINE 5'-PHOSPHATE SYNTHASE"/>
    <property type="match status" value="1"/>
</dbReference>
<dbReference type="Pfam" id="PF03740">
    <property type="entry name" value="PdxJ"/>
    <property type="match status" value="1"/>
</dbReference>
<dbReference type="SUPFAM" id="SSF63892">
    <property type="entry name" value="Pyridoxine 5'-phosphate synthase"/>
    <property type="match status" value="1"/>
</dbReference>
<reference key="1">
    <citation type="submission" date="2005-08" db="EMBL/GenBank/DDBJ databases">
        <title>Complete sequence of Pelodictyon luteolum DSM 273.</title>
        <authorList>
            <consortium name="US DOE Joint Genome Institute"/>
            <person name="Copeland A."/>
            <person name="Lucas S."/>
            <person name="Lapidus A."/>
            <person name="Barry K."/>
            <person name="Detter J.C."/>
            <person name="Glavina T."/>
            <person name="Hammon N."/>
            <person name="Israni S."/>
            <person name="Pitluck S."/>
            <person name="Bryant D."/>
            <person name="Schmutz J."/>
            <person name="Larimer F."/>
            <person name="Land M."/>
            <person name="Kyrpides N."/>
            <person name="Ivanova N."/>
            <person name="Richardson P."/>
        </authorList>
    </citation>
    <scope>NUCLEOTIDE SEQUENCE [LARGE SCALE GENOMIC DNA]</scope>
    <source>
        <strain>DSM 273 / BCRC 81028 / 2530</strain>
    </source>
</reference>
<gene>
    <name evidence="1" type="primary">pdxJ</name>
    <name type="ordered locus">Plut_0446</name>
</gene>
<comment type="function">
    <text evidence="1">Catalyzes the complicated ring closure reaction between the two acyclic compounds 1-deoxy-D-xylulose-5-phosphate (DXP) and 3-amino-2-oxopropyl phosphate (1-amino-acetone-3-phosphate or AAP) to form pyridoxine 5'-phosphate (PNP) and inorganic phosphate.</text>
</comment>
<comment type="catalytic activity">
    <reaction evidence="1">
        <text>3-amino-2-oxopropyl phosphate + 1-deoxy-D-xylulose 5-phosphate = pyridoxine 5'-phosphate + phosphate + 2 H2O + H(+)</text>
        <dbReference type="Rhea" id="RHEA:15265"/>
        <dbReference type="ChEBI" id="CHEBI:15377"/>
        <dbReference type="ChEBI" id="CHEBI:15378"/>
        <dbReference type="ChEBI" id="CHEBI:43474"/>
        <dbReference type="ChEBI" id="CHEBI:57279"/>
        <dbReference type="ChEBI" id="CHEBI:57792"/>
        <dbReference type="ChEBI" id="CHEBI:58589"/>
        <dbReference type="EC" id="2.6.99.2"/>
    </reaction>
</comment>
<comment type="pathway">
    <text evidence="1">Cofactor biosynthesis; pyridoxine 5'-phosphate biosynthesis; pyridoxine 5'-phosphate from D-erythrose 4-phosphate: step 5/5.</text>
</comment>
<comment type="subunit">
    <text evidence="1">Homooctamer; tetramer of dimers.</text>
</comment>
<comment type="subcellular location">
    <subcellularLocation>
        <location evidence="1">Cytoplasm</location>
    </subcellularLocation>
</comment>
<comment type="similarity">
    <text evidence="1">Belongs to the PNP synthase family.</text>
</comment>
<proteinExistence type="inferred from homology"/>